<gene>
    <name evidence="11 14" type="primary">NSUN4</name>
</gene>
<name>NSUN4_HUMAN</name>
<accession>Q96CB9</accession>
<accession>A8K6S6</accession>
<accession>B3KQ50</accession>
<accession>B4DHA4</accession>
<accession>Q5TDF7</accession>
<accession>Q96AN8</accession>
<accession>Q9HAJ8</accession>
<dbReference type="EC" id="2.1.1.-" evidence="1 8"/>
<dbReference type="EMBL" id="AK021577">
    <property type="protein sequence ID" value="BAB13847.1"/>
    <property type="molecule type" value="mRNA"/>
</dbReference>
<dbReference type="EMBL" id="AK057420">
    <property type="protein sequence ID" value="BAG51912.1"/>
    <property type="molecule type" value="mRNA"/>
</dbReference>
<dbReference type="EMBL" id="AK291741">
    <property type="protein sequence ID" value="BAF84430.1"/>
    <property type="molecule type" value="mRNA"/>
</dbReference>
<dbReference type="EMBL" id="AK295003">
    <property type="protein sequence ID" value="BAG58065.1"/>
    <property type="molecule type" value="mRNA"/>
</dbReference>
<dbReference type="EMBL" id="AL122001">
    <property type="status" value="NOT_ANNOTATED_CDS"/>
    <property type="molecule type" value="Genomic_DNA"/>
</dbReference>
<dbReference type="EMBL" id="CH471059">
    <property type="protein sequence ID" value="EAX06917.1"/>
    <property type="molecule type" value="Genomic_DNA"/>
</dbReference>
<dbReference type="EMBL" id="BC014441">
    <property type="protein sequence ID" value="AAH14441.1"/>
    <property type="molecule type" value="mRNA"/>
</dbReference>
<dbReference type="EMBL" id="BC016907">
    <property type="protein sequence ID" value="AAH16907.1"/>
    <property type="molecule type" value="mRNA"/>
</dbReference>
<dbReference type="CCDS" id="CCDS534.1">
    <molecule id="Q96CB9-1"/>
</dbReference>
<dbReference type="CCDS" id="CCDS57996.1">
    <molecule id="Q96CB9-4"/>
</dbReference>
<dbReference type="RefSeq" id="NP_001243056.1">
    <molecule id="Q96CB9-4"/>
    <property type="nucleotide sequence ID" value="NM_001256127.3"/>
</dbReference>
<dbReference type="RefSeq" id="NP_001243057.1">
    <molecule id="Q96CB9-4"/>
    <property type="nucleotide sequence ID" value="NM_001256128.3"/>
</dbReference>
<dbReference type="RefSeq" id="NP_950245.2">
    <molecule id="Q96CB9-1"/>
    <property type="nucleotide sequence ID" value="NM_199044.3"/>
</dbReference>
<dbReference type="PDB" id="4FP9">
    <property type="method" value="X-ray"/>
    <property type="resolution" value="2.90 A"/>
    <property type="chains" value="A/C/D/F=26-384"/>
</dbReference>
<dbReference type="PDB" id="4FZV">
    <property type="method" value="X-ray"/>
    <property type="resolution" value="2.00 A"/>
    <property type="chains" value="A=26-384"/>
</dbReference>
<dbReference type="PDB" id="7O9K">
    <property type="method" value="EM"/>
    <property type="resolution" value="3.10 A"/>
    <property type="chains" value="A1=1-384"/>
</dbReference>
<dbReference type="PDB" id="7O9M">
    <property type="method" value="EM"/>
    <property type="resolution" value="2.50 A"/>
    <property type="chains" value="A1=1-384"/>
</dbReference>
<dbReference type="PDB" id="7ODR">
    <property type="method" value="EM"/>
    <property type="resolution" value="2.90 A"/>
    <property type="chains" value="x=1-384"/>
</dbReference>
<dbReference type="PDB" id="7ODS">
    <property type="method" value="EM"/>
    <property type="resolution" value="3.10 A"/>
    <property type="chains" value="x=1-384"/>
</dbReference>
<dbReference type="PDB" id="7ODT">
    <property type="method" value="EM"/>
    <property type="resolution" value="3.10 A"/>
    <property type="chains" value="x=1-384"/>
</dbReference>
<dbReference type="PDB" id="7OF0">
    <property type="method" value="EM"/>
    <property type="resolution" value="2.20 A"/>
    <property type="chains" value="C=1-384"/>
</dbReference>
<dbReference type="PDB" id="7OF3">
    <property type="method" value="EM"/>
    <property type="resolution" value="2.70 A"/>
    <property type="chains" value="C=1-384"/>
</dbReference>
<dbReference type="PDB" id="7OF5">
    <property type="method" value="EM"/>
    <property type="resolution" value="2.90 A"/>
    <property type="chains" value="C=1-384"/>
</dbReference>
<dbReference type="PDB" id="7OF7">
    <property type="method" value="EM"/>
    <property type="resolution" value="2.50 A"/>
    <property type="chains" value="C=1-384"/>
</dbReference>
<dbReference type="PDB" id="7OIC">
    <property type="method" value="EM"/>
    <property type="resolution" value="3.10 A"/>
    <property type="chains" value="x=1-384"/>
</dbReference>
<dbReference type="PDB" id="7PD3">
    <property type="method" value="EM"/>
    <property type="resolution" value="3.40 A"/>
    <property type="chains" value="x=1-384"/>
</dbReference>
<dbReference type="PDB" id="8PK0">
    <property type="method" value="EM"/>
    <property type="resolution" value="3.03 A"/>
    <property type="chains" value="x=1-384"/>
</dbReference>
<dbReference type="PDB" id="8QSJ">
    <property type="method" value="EM"/>
    <property type="resolution" value="3.00 A"/>
    <property type="chains" value="x=1-384"/>
</dbReference>
<dbReference type="PDBsum" id="4FP9"/>
<dbReference type="PDBsum" id="4FZV"/>
<dbReference type="PDBsum" id="7O9K"/>
<dbReference type="PDBsum" id="7O9M"/>
<dbReference type="PDBsum" id="7ODR"/>
<dbReference type="PDBsum" id="7ODS"/>
<dbReference type="PDBsum" id="7ODT"/>
<dbReference type="PDBsum" id="7OF0"/>
<dbReference type="PDBsum" id="7OF3"/>
<dbReference type="PDBsum" id="7OF5"/>
<dbReference type="PDBsum" id="7OF7"/>
<dbReference type="PDBsum" id="7OIC"/>
<dbReference type="PDBsum" id="7PD3"/>
<dbReference type="PDBsum" id="8PK0"/>
<dbReference type="PDBsum" id="8QSJ"/>
<dbReference type="EMDB" id="EMD-12763"/>
<dbReference type="EMDB" id="EMD-12764"/>
<dbReference type="EMDB" id="EMD-12845"/>
<dbReference type="EMDB" id="EMD-12846"/>
<dbReference type="EMDB" id="EMD-12847"/>
<dbReference type="EMDB" id="EMD-12865"/>
<dbReference type="EMDB" id="EMD-12868"/>
<dbReference type="EMDB" id="EMD-12870"/>
<dbReference type="EMDB" id="EMD-12872"/>
<dbReference type="EMDB" id="EMD-12925"/>
<dbReference type="EMDB" id="EMD-13329"/>
<dbReference type="EMDB" id="EMD-17719"/>
<dbReference type="SMR" id="Q96CB9"/>
<dbReference type="BioGRID" id="132288">
    <property type="interactions" value="188"/>
</dbReference>
<dbReference type="ComplexPortal" id="CPX-885">
    <property type="entry name" value="MTERF4-NSUN4 mitochondiral ribosomal assembly complex"/>
</dbReference>
<dbReference type="CORUM" id="Q96CB9"/>
<dbReference type="DIP" id="DIP-58104N"/>
<dbReference type="FunCoup" id="Q96CB9">
    <property type="interactions" value="1011"/>
</dbReference>
<dbReference type="IntAct" id="Q96CB9">
    <property type="interactions" value="72"/>
</dbReference>
<dbReference type="MINT" id="Q96CB9"/>
<dbReference type="STRING" id="9606.ENSP00000419740"/>
<dbReference type="iPTMnet" id="Q96CB9"/>
<dbReference type="PhosphoSitePlus" id="Q96CB9"/>
<dbReference type="SwissPalm" id="Q96CB9"/>
<dbReference type="BioMuta" id="NSUN4"/>
<dbReference type="DMDM" id="152125805"/>
<dbReference type="jPOST" id="Q96CB9"/>
<dbReference type="MassIVE" id="Q96CB9"/>
<dbReference type="PaxDb" id="9606-ENSP00000419740"/>
<dbReference type="PeptideAtlas" id="Q96CB9"/>
<dbReference type="ProteomicsDB" id="4205"/>
<dbReference type="ProteomicsDB" id="76175">
    <molecule id="Q96CB9-1"/>
</dbReference>
<dbReference type="ProteomicsDB" id="76176">
    <molecule id="Q96CB9-2"/>
</dbReference>
<dbReference type="ProteomicsDB" id="76177">
    <molecule id="Q96CB9-3"/>
</dbReference>
<dbReference type="Pumba" id="Q96CB9"/>
<dbReference type="Antibodypedia" id="32791">
    <property type="antibodies" value="66 antibodies from 20 providers"/>
</dbReference>
<dbReference type="DNASU" id="387338"/>
<dbReference type="Ensembl" id="ENST00000474844.6">
    <molecule id="Q96CB9-1"/>
    <property type="protein sequence ID" value="ENSP00000419740.1"/>
    <property type="gene ID" value="ENSG00000117481.12"/>
</dbReference>
<dbReference type="Ensembl" id="ENST00000537428.2">
    <molecule id="Q96CB9-4"/>
    <property type="protein sequence ID" value="ENSP00000437758.1"/>
    <property type="gene ID" value="ENSG00000117481.12"/>
</dbReference>
<dbReference type="GeneID" id="387338"/>
<dbReference type="KEGG" id="hsa:387338"/>
<dbReference type="MANE-Select" id="ENST00000474844.6">
    <property type="protein sequence ID" value="ENSP00000419740.1"/>
    <property type="RefSeq nucleotide sequence ID" value="NM_199044.4"/>
    <property type="RefSeq protein sequence ID" value="NP_950245.2"/>
</dbReference>
<dbReference type="UCSC" id="uc001cpr.3">
    <molecule id="Q96CB9-1"/>
    <property type="organism name" value="human"/>
</dbReference>
<dbReference type="AGR" id="HGNC:31802"/>
<dbReference type="CTD" id="387338"/>
<dbReference type="DisGeNET" id="387338"/>
<dbReference type="GeneCards" id="NSUN4"/>
<dbReference type="HGNC" id="HGNC:31802">
    <property type="gene designation" value="NSUN4"/>
</dbReference>
<dbReference type="HPA" id="ENSG00000117481">
    <property type="expression patterns" value="Tissue enriched (testis)"/>
</dbReference>
<dbReference type="MIM" id="615394">
    <property type="type" value="gene"/>
</dbReference>
<dbReference type="neXtProt" id="NX_Q96CB9"/>
<dbReference type="OpenTargets" id="ENSG00000117481"/>
<dbReference type="PharmGKB" id="PA134953046"/>
<dbReference type="VEuPathDB" id="HostDB:ENSG00000117481"/>
<dbReference type="eggNOG" id="KOG2198">
    <property type="taxonomic scope" value="Eukaryota"/>
</dbReference>
<dbReference type="GeneTree" id="ENSGT00940000153665"/>
<dbReference type="HOGENOM" id="CLU_041061_3_1_1"/>
<dbReference type="InParanoid" id="Q96CB9"/>
<dbReference type="OrthoDB" id="9533415at2759"/>
<dbReference type="PAN-GO" id="Q96CB9">
    <property type="GO annotations" value="3 GO annotations based on evolutionary models"/>
</dbReference>
<dbReference type="PhylomeDB" id="Q96CB9"/>
<dbReference type="TreeFam" id="TF321304"/>
<dbReference type="PathwayCommons" id="Q96CB9"/>
<dbReference type="Reactome" id="R-HSA-6793080">
    <property type="pathway name" value="rRNA modification in the mitochondrion"/>
</dbReference>
<dbReference type="SignaLink" id="Q96CB9"/>
<dbReference type="BioGRID-ORCS" id="387338">
    <property type="hits" value="286 hits in 1162 CRISPR screens"/>
</dbReference>
<dbReference type="EvolutionaryTrace" id="Q96CB9"/>
<dbReference type="GenomeRNAi" id="387338"/>
<dbReference type="Pharos" id="Q96CB9">
    <property type="development level" value="Tbio"/>
</dbReference>
<dbReference type="PRO" id="PR:Q96CB9"/>
<dbReference type="Proteomes" id="UP000005640">
    <property type="component" value="Chromosome 1"/>
</dbReference>
<dbReference type="RNAct" id="Q96CB9">
    <property type="molecule type" value="protein"/>
</dbReference>
<dbReference type="Bgee" id="ENSG00000117481">
    <property type="expression patterns" value="Expressed in sperm and 184 other cell types or tissues"/>
</dbReference>
<dbReference type="ExpressionAtlas" id="Q96CB9">
    <property type="expression patterns" value="baseline and differential"/>
</dbReference>
<dbReference type="GO" id="GO:0005762">
    <property type="term" value="C:mitochondrial large ribosomal subunit"/>
    <property type="evidence" value="ECO:0000314"/>
    <property type="project" value="MGI"/>
</dbReference>
<dbReference type="GO" id="GO:0005759">
    <property type="term" value="C:mitochondrial matrix"/>
    <property type="evidence" value="ECO:0000314"/>
    <property type="project" value="FlyBase"/>
</dbReference>
<dbReference type="GO" id="GO:0005739">
    <property type="term" value="C:mitochondrion"/>
    <property type="evidence" value="ECO:0006056"/>
    <property type="project" value="FlyBase"/>
</dbReference>
<dbReference type="GO" id="GO:0008168">
    <property type="term" value="F:methyltransferase activity"/>
    <property type="evidence" value="ECO:0000318"/>
    <property type="project" value="GO_Central"/>
</dbReference>
<dbReference type="GO" id="GO:0062152">
    <property type="term" value="F:mRNA (cytidine-5-)-methyltransferase activity"/>
    <property type="evidence" value="ECO:0000314"/>
    <property type="project" value="UniProtKB"/>
</dbReference>
<dbReference type="GO" id="GO:0008173">
    <property type="term" value="F:RNA methyltransferase activity"/>
    <property type="evidence" value="ECO:0000314"/>
    <property type="project" value="FlyBase"/>
</dbReference>
<dbReference type="GO" id="GO:0009383">
    <property type="term" value="F:rRNA (cytosine-C5-)-methyltransferase activity"/>
    <property type="evidence" value="ECO:0000269"/>
    <property type="project" value="Reactome"/>
</dbReference>
<dbReference type="GO" id="GO:0019843">
    <property type="term" value="F:rRNA binding"/>
    <property type="evidence" value="ECO:0007669"/>
    <property type="project" value="UniProtKB-KW"/>
</dbReference>
<dbReference type="GO" id="GO:0008649">
    <property type="term" value="F:rRNA methyltransferase activity"/>
    <property type="evidence" value="ECO:0000314"/>
    <property type="project" value="UniProtKB"/>
</dbReference>
<dbReference type="GO" id="GO:0000957">
    <property type="term" value="P:mitochondrial RNA catabolic process"/>
    <property type="evidence" value="ECO:0000314"/>
    <property type="project" value="FlyBase"/>
</dbReference>
<dbReference type="GO" id="GO:1900864">
    <property type="term" value="P:mitochondrial RNA modification"/>
    <property type="evidence" value="ECO:0000314"/>
    <property type="project" value="FlyBase"/>
</dbReference>
<dbReference type="GO" id="GO:0031167">
    <property type="term" value="P:rRNA methylation"/>
    <property type="evidence" value="ECO:0000314"/>
    <property type="project" value="UniProtKB"/>
</dbReference>
<dbReference type="CDD" id="cd02440">
    <property type="entry name" value="AdoMet_MTases"/>
    <property type="match status" value="1"/>
</dbReference>
<dbReference type="FunFam" id="3.40.50.150:FF:000055">
    <property type="entry name" value="5-methylcytosine rRNA methyltransferase NSUN4"/>
    <property type="match status" value="1"/>
</dbReference>
<dbReference type="Gene3D" id="6.20.240.40">
    <property type="match status" value="1"/>
</dbReference>
<dbReference type="Gene3D" id="3.40.50.150">
    <property type="entry name" value="Vaccinia Virus protein VP39"/>
    <property type="match status" value="1"/>
</dbReference>
<dbReference type="InterPro" id="IPR049560">
    <property type="entry name" value="MeTrfase_RsmB-F_NOP2_cat"/>
</dbReference>
<dbReference type="InterPro" id="IPR001678">
    <property type="entry name" value="MeTrfase_RsmB-F_NOP2_dom"/>
</dbReference>
<dbReference type="InterPro" id="IPR023267">
    <property type="entry name" value="RCMT"/>
</dbReference>
<dbReference type="InterPro" id="IPR029063">
    <property type="entry name" value="SAM-dependent_MTases_sf"/>
</dbReference>
<dbReference type="PANTHER" id="PTHR22808:SF3">
    <property type="entry name" value="5-METHYLCYTOSINE RRNA METHYLTRANSFERASE NSUN4"/>
    <property type="match status" value="1"/>
</dbReference>
<dbReference type="PANTHER" id="PTHR22808">
    <property type="entry name" value="NCL1 YEAST -RELATED NOL1/NOP2/FMU SUN DOMAIN-CONTAINING"/>
    <property type="match status" value="1"/>
</dbReference>
<dbReference type="Pfam" id="PF01189">
    <property type="entry name" value="Methyltr_RsmB-F"/>
    <property type="match status" value="1"/>
</dbReference>
<dbReference type="PRINTS" id="PR02008">
    <property type="entry name" value="RCMTFAMILY"/>
</dbReference>
<dbReference type="SUPFAM" id="SSF53335">
    <property type="entry name" value="S-adenosyl-L-methionine-dependent methyltransferases"/>
    <property type="match status" value="1"/>
</dbReference>
<dbReference type="PROSITE" id="PS51686">
    <property type="entry name" value="SAM_MT_RSMB_NOP"/>
    <property type="match status" value="1"/>
</dbReference>
<protein>
    <recommendedName>
        <fullName>5-cytosine rRNA methyltransferase NSUN4</fullName>
        <ecNumber evidence="1">2.1.1.-</ecNumber>
    </recommendedName>
    <alternativeName>
        <fullName evidence="12">5-cytosine tRNA methyltransferase NSUN4</fullName>
        <ecNumber evidence="1">2.1.1.-</ecNumber>
    </alternativeName>
    <alternativeName>
        <fullName>NOL1/NOP2/Sun domain family member 4</fullName>
    </alternativeName>
    <alternativeName>
        <fullName>mRNA cytosine C(5)-methyltransferase NSUN4</fullName>
        <ecNumber evidence="8">2.1.1.-</ecNumber>
    </alternativeName>
</protein>
<proteinExistence type="evidence at protein level"/>
<organism>
    <name type="scientific">Homo sapiens</name>
    <name type="common">Human</name>
    <dbReference type="NCBI Taxonomy" id="9606"/>
    <lineage>
        <taxon>Eukaryota</taxon>
        <taxon>Metazoa</taxon>
        <taxon>Chordata</taxon>
        <taxon>Craniata</taxon>
        <taxon>Vertebrata</taxon>
        <taxon>Euteleostomi</taxon>
        <taxon>Mammalia</taxon>
        <taxon>Eutheria</taxon>
        <taxon>Euarchontoglires</taxon>
        <taxon>Primates</taxon>
        <taxon>Haplorrhini</taxon>
        <taxon>Catarrhini</taxon>
        <taxon>Hominidae</taxon>
        <taxon>Homo</taxon>
    </lineage>
</organism>
<keyword id="KW-0002">3D-structure</keyword>
<keyword id="KW-0025">Alternative splicing</keyword>
<keyword id="KW-0489">Methyltransferase</keyword>
<keyword id="KW-0496">Mitochondrion</keyword>
<keyword id="KW-0597">Phosphoprotein</keyword>
<keyword id="KW-1267">Proteomics identification</keyword>
<keyword id="KW-1185">Reference proteome</keyword>
<keyword id="KW-0690">Ribosome biogenesis</keyword>
<keyword id="KW-0694">RNA-binding</keyword>
<keyword id="KW-0698">rRNA processing</keyword>
<keyword id="KW-0699">rRNA-binding</keyword>
<keyword id="KW-0949">S-adenosyl-L-methionine</keyword>
<keyword id="KW-0808">Transferase</keyword>
<keyword id="KW-0809">Transit peptide</keyword>
<feature type="transit peptide" description="Mitochondrion" evidence="6 7">
    <location>
        <begin position="1"/>
        <end position="25"/>
    </location>
</feature>
<feature type="chain" id="PRO_0000289234" description="5-cytosine rRNA methyltransferase NSUN4">
    <location>
        <begin position="26"/>
        <end position="384"/>
    </location>
</feature>
<feature type="active site" description="Nucleophile" evidence="2 6 13">
    <location>
        <position position="310"/>
    </location>
</feature>
<feature type="binding site" evidence="6 15">
    <location>
        <position position="185"/>
    </location>
    <ligand>
        <name>S-adenosyl-L-methionine</name>
        <dbReference type="ChEBI" id="CHEBI:59789"/>
    </ligand>
</feature>
<feature type="binding site" evidence="6 7 15 16">
    <location>
        <position position="186"/>
    </location>
    <ligand>
        <name>S-adenosyl-L-methionine</name>
        <dbReference type="ChEBI" id="CHEBI:59789"/>
    </ligand>
</feature>
<feature type="binding site" evidence="6 7 15 16">
    <location>
        <position position="187"/>
    </location>
    <ligand>
        <name>S-adenosyl-L-methionine</name>
        <dbReference type="ChEBI" id="CHEBI:59789"/>
    </ligand>
</feature>
<feature type="binding site" evidence="6 7 15 16">
    <location>
        <position position="204"/>
    </location>
    <ligand>
        <name>S-adenosyl-L-methionine</name>
        <dbReference type="ChEBI" id="CHEBI:59789"/>
    </ligand>
</feature>
<feature type="binding site" evidence="6 7 15 16">
    <location>
        <position position="209"/>
    </location>
    <ligand>
        <name>S-adenosyl-L-methionine</name>
        <dbReference type="ChEBI" id="CHEBI:59789"/>
    </ligand>
</feature>
<feature type="binding site" evidence="2 6 7 15 16">
    <location>
        <position position="237"/>
    </location>
    <ligand>
        <name>S-adenosyl-L-methionine</name>
        <dbReference type="ChEBI" id="CHEBI:59789"/>
    </ligand>
</feature>
<feature type="binding site" evidence="6 7 15 16">
    <location>
        <position position="238"/>
    </location>
    <ligand>
        <name>S-adenosyl-L-methionine</name>
        <dbReference type="ChEBI" id="CHEBI:59789"/>
    </ligand>
</feature>
<feature type="binding site" evidence="2">
    <location>
        <position position="255"/>
    </location>
    <ligand>
        <name>S-adenosyl-L-methionine</name>
        <dbReference type="ChEBI" id="CHEBI:59789"/>
    </ligand>
</feature>
<feature type="modified residue" description="Phosphoserine" evidence="17">
    <location>
        <position position="206"/>
    </location>
</feature>
<feature type="splice variant" id="VSP_025971" description="In isoform 3." evidence="9">
    <location>
        <begin position="1"/>
        <end position="198"/>
    </location>
</feature>
<feature type="splice variant" id="VSP_045053" description="In isoform 4." evidence="9">
    <location>
        <begin position="1"/>
        <end position="49"/>
    </location>
</feature>
<feature type="splice variant" id="VSP_025972" description="In isoform 2." evidence="10">
    <location>
        <begin position="147"/>
        <end position="384"/>
    </location>
</feature>
<feature type="splice variant" id="VSP_025973" description="In isoform 3." evidence="9">
    <original>NLAANDLSPSRIARLQKILHS</original>
    <variation>MLPPCCLFWPSACSLGTSCLT</variation>
    <location>
        <begin position="199"/>
        <end position="219"/>
    </location>
</feature>
<feature type="sequence variant" id="VAR_032606" description="In dbSNP:rs3737744." evidence="3 4">
    <original>T</original>
    <variation>A</variation>
    <location>
        <position position="51"/>
    </location>
</feature>
<feature type="sequence variant" id="VAR_032607" description="In dbSNP:rs17102152.">
    <original>N</original>
    <variation>K</variation>
    <location>
        <position position="128"/>
    </location>
</feature>
<feature type="sequence variant" id="VAR_032608" description="In dbSNP:rs13374337.">
    <original>I</original>
    <variation>T</variation>
    <location>
        <position position="325"/>
    </location>
</feature>
<feature type="sequence variant" id="VAR_032609" description="In dbSNP:rs9865." evidence="3">
    <original>I</original>
    <variation>V</variation>
    <location>
        <position position="365"/>
    </location>
</feature>
<feature type="mutagenesis site" description="Disrupts complex with MTERFD2; when associated with A-136, R-139 and A-141." evidence="6">
    <original>V</original>
    <variation>R</variation>
    <location>
        <position position="65"/>
    </location>
</feature>
<feature type="mutagenesis site" description="Disrupts complex with MTERFD2; when associated with R-65, R-139 and A-141." evidence="6">
    <original>R</original>
    <variation>A</variation>
    <location>
        <position position="136"/>
    </location>
</feature>
<feature type="mutagenesis site" description="Disrupts complex with MTERFD2; when associated with R-65, A-136, and A-141." evidence="6">
    <original>I</original>
    <variation>R</variation>
    <location>
        <position position="139"/>
    </location>
</feature>
<feature type="mutagenesis site" description="Disrupts complex with MTERFD2; when associated with R-65, A-136 and R-139." evidence="6">
    <original>R</original>
    <variation>A</variation>
    <location>
        <position position="141"/>
    </location>
</feature>
<feature type="mutagenesis site" description="Abolished methyltransferase activity; when associated with W-310." evidence="8">
    <original>C</original>
    <variation>W</variation>
    <location>
        <position position="258"/>
    </location>
</feature>
<feature type="mutagenesis site" description="Abolished methyltransferase activity; when associated with W-258." evidence="8">
    <original>C</original>
    <variation>W</variation>
    <location>
        <position position="310"/>
    </location>
</feature>
<feature type="sequence conflict" description="In Ref. 1; BAG51912." evidence="12" ref="1">
    <original>Q</original>
    <variation>R</variation>
    <location>
        <position position="282"/>
    </location>
</feature>
<feature type="helix" evidence="19">
    <location>
        <begin position="40"/>
        <end position="56"/>
    </location>
</feature>
<feature type="helix" evidence="19">
    <location>
        <begin position="57"/>
        <end position="59"/>
    </location>
</feature>
<feature type="helix" evidence="19">
    <location>
        <begin position="60"/>
        <end position="67"/>
    </location>
</feature>
<feature type="strand" evidence="19">
    <location>
        <begin position="74"/>
        <end position="77"/>
    </location>
</feature>
<feature type="helix" evidence="18">
    <location>
        <begin position="79"/>
        <end position="81"/>
    </location>
</feature>
<feature type="helix" evidence="19">
    <location>
        <begin position="83"/>
        <end position="92"/>
    </location>
</feature>
<feature type="helix" evidence="19">
    <location>
        <begin position="98"/>
        <end position="104"/>
    </location>
</feature>
<feature type="turn" evidence="19">
    <location>
        <begin position="105"/>
        <end position="107"/>
    </location>
</feature>
<feature type="helix" evidence="19">
    <location>
        <begin position="121"/>
        <end position="124"/>
    </location>
</feature>
<feature type="strand" evidence="19">
    <location>
        <begin position="131"/>
        <end position="133"/>
    </location>
</feature>
<feature type="strand" evidence="19">
    <location>
        <begin position="151"/>
        <end position="158"/>
    </location>
</feature>
<feature type="helix" evidence="19">
    <location>
        <begin position="160"/>
        <end position="162"/>
    </location>
</feature>
<feature type="helix" evidence="19">
    <location>
        <begin position="163"/>
        <end position="169"/>
    </location>
</feature>
<feature type="strand" evidence="19">
    <location>
        <begin position="175"/>
        <end position="181"/>
    </location>
</feature>
<feature type="helix" evidence="19">
    <location>
        <begin position="186"/>
        <end position="193"/>
    </location>
</feature>
<feature type="strand" evidence="19">
    <location>
        <begin position="197"/>
        <end position="203"/>
    </location>
</feature>
<feature type="helix" evidence="19">
    <location>
        <begin position="207"/>
        <end position="220"/>
    </location>
</feature>
<feature type="turn" evidence="19">
    <location>
        <begin position="223"/>
        <end position="227"/>
    </location>
</feature>
<feature type="strand" evidence="19">
    <location>
        <begin position="228"/>
        <end position="234"/>
    </location>
</feature>
<feature type="helix" evidence="19">
    <location>
        <begin position="238"/>
        <end position="240"/>
    </location>
</feature>
<feature type="helix" evidence="19">
    <location>
        <begin position="241"/>
        <end position="244"/>
    </location>
</feature>
<feature type="strand" evidence="19">
    <location>
        <begin position="249"/>
        <end position="255"/>
    </location>
</feature>
<feature type="helix" evidence="19">
    <location>
        <begin position="261"/>
        <end position="264"/>
    </location>
</feature>
<feature type="helix" evidence="19">
    <location>
        <begin position="275"/>
        <end position="277"/>
    </location>
</feature>
<feature type="helix" evidence="19">
    <location>
        <begin position="278"/>
        <end position="282"/>
    </location>
</feature>
<feature type="helix" evidence="19">
    <location>
        <begin position="284"/>
        <end position="297"/>
    </location>
</feature>
<feature type="strand" evidence="19">
    <location>
        <begin position="299"/>
        <end position="310"/>
    </location>
</feature>
<feature type="turn" evidence="19">
    <location>
        <begin position="314"/>
        <end position="317"/>
    </location>
</feature>
<feature type="helix" evidence="19">
    <location>
        <begin position="318"/>
        <end position="332"/>
    </location>
</feature>
<feature type="strand" evidence="19">
    <location>
        <begin position="336"/>
        <end position="338"/>
    </location>
</feature>
<feature type="helix" evidence="19">
    <location>
        <begin position="342"/>
        <end position="348"/>
    </location>
</feature>
<feature type="turn" evidence="19">
    <location>
        <begin position="349"/>
        <end position="351"/>
    </location>
</feature>
<feature type="strand" evidence="20">
    <location>
        <begin position="353"/>
        <end position="356"/>
    </location>
</feature>
<feature type="strand" evidence="19">
    <location>
        <begin position="359"/>
        <end position="365"/>
    </location>
</feature>
<feature type="strand" evidence="20">
    <location>
        <begin position="368"/>
        <end position="370"/>
    </location>
</feature>
<feature type="strand" evidence="19">
    <location>
        <begin position="375"/>
        <end position="382"/>
    </location>
</feature>
<sequence length="384" mass="43089">MAALTLRGVRELLKRVDLATVPRRHRYKKKWAATEPKFPAVRLALQNFDMTYSVQFGDLWPSIRVSLLSEQKYGALVNNFAAWDHVSAKLEQLSAKDFVNEAISHWELQSEGGQSAAPSPASWACSPNLRCFTFDRGDISRFPPARPGSLGVMEYYLMDAASLLPVLALGLQPGDIVLDLCAAPGGKTLALLQTGCCRNLAANDLSPSRIARLQKILHSYVPEEIRDGNQVRVTSWDGRKWGELEGDTYDRVLVDVPCTTDRHSLHEEENNIFKRSRKKERQILPVLQVQLLAAGLLATKPGGHVVYSTCSLSHLQNEYVVQGAIELLANQYSIQVQVEDLTHFRRVFMDTFCFFSSCQVGELVIPNLMANFGPMYFCKMRRLT</sequence>
<comment type="function">
    <text evidence="5 7 8">Mitochondrial RNA cytosine C(5)-methyltransferase that methylates cytosine to 5-methylcytosine (m5C) in various RNAs, such as rRNAs, mRNAs and some long non-coding RNAs (lncRNAs) (PubMed:21531335, PubMed:23022348, PubMed:39019044). Involved in mitochondrial ribosome small subunit (SSU) maturation by catalyzing methylation of mitochondrial 12S rRNA; the function is independent of MTERFD2/MTERF4 and assembled mitochondrial ribosome large subunit (LSU) (PubMed:21531335, PubMed:23022348). Targeted to LSU by MTERFD2/MTERF4 and probably is involved in a final step in ribosome biogenesis to ensure that SSU and LSU are assembled (PubMed:21531335, PubMed:23022348). In vitro can methylate 16S rRNA of the LSU; the methylation is enhanced by MTERFD/MTERF4 (PubMed:23022348). Also acts as a regulator of innate immunity by marking double-stranded mitochondrial RNAs(mt-dsRNAs) generated in response to stress: catalyzes m5C modification on mitochondrial RNAs, such as a mRNAs and lncRNAs, with a preference for the termini of light-strand lncRNAs, promoting their degradation and cytosolic release (PubMed:39019044). Modified light-strand lncRNAs are then recognized by C1QBP reader and recruited to the mitochondrial degradosome complex, which promotes their degradation (PubMed:39019044).</text>
</comment>
<comment type="catalytic activity">
    <reaction evidence="5 7">
        <text>a cytidine in rRNA + S-adenosyl-L-methionine = a 5-methylcytidine in rRNA + S-adenosyl-L-homocysteine + H(+)</text>
        <dbReference type="Rhea" id="RHEA:61484"/>
        <dbReference type="Rhea" id="RHEA-COMP:15836"/>
        <dbReference type="Rhea" id="RHEA-COMP:15837"/>
        <dbReference type="ChEBI" id="CHEBI:15378"/>
        <dbReference type="ChEBI" id="CHEBI:57856"/>
        <dbReference type="ChEBI" id="CHEBI:59789"/>
        <dbReference type="ChEBI" id="CHEBI:74483"/>
        <dbReference type="ChEBI" id="CHEBI:82748"/>
    </reaction>
</comment>
<comment type="catalytic activity">
    <reaction evidence="8">
        <text>a cytidine in mRNA + S-adenosyl-L-methionine = a 5-methylcytidine in mRNA + S-adenosyl-L-homocysteine + H(+)</text>
        <dbReference type="Rhea" id="RHEA:61464"/>
        <dbReference type="Rhea" id="RHEA-COMP:15145"/>
        <dbReference type="Rhea" id="RHEA-COMP:15826"/>
        <dbReference type="ChEBI" id="CHEBI:15378"/>
        <dbReference type="ChEBI" id="CHEBI:57856"/>
        <dbReference type="ChEBI" id="CHEBI:59789"/>
        <dbReference type="ChEBI" id="CHEBI:74483"/>
        <dbReference type="ChEBI" id="CHEBI:82748"/>
    </reaction>
</comment>
<comment type="subunit">
    <text evidence="6 7">Heterodimer with MTERFD2/MTERF4; this interaction seems to be required for NSUN4 recruitment to the mitochondrial large ribosomal subunit.</text>
</comment>
<comment type="interaction">
    <interactant intactId="EBI-16012886">
        <id>Q96CB9-1</id>
    </interactant>
    <interactant intactId="EBI-948435">
        <id>Q7Z6M4</id>
        <label>MTERF4</label>
    </interactant>
    <organismsDiffer>false</organismsDiffer>
    <experiments>7</experiments>
</comment>
<comment type="subcellular location">
    <subcellularLocation>
        <location evidence="5 6 7">Mitochondrion</location>
    </subcellularLocation>
</comment>
<comment type="alternative products">
    <event type="alternative splicing"/>
    <isoform>
        <id>Q96CB9-1</id>
        <name>1</name>
        <sequence type="displayed"/>
    </isoform>
    <isoform>
        <id>Q96CB9-2</id>
        <name>2</name>
        <sequence type="described" ref="VSP_025972"/>
    </isoform>
    <isoform>
        <id>Q96CB9-3</id>
        <name>3</name>
        <sequence type="described" ref="VSP_025971 VSP_025973"/>
    </isoform>
    <isoform>
        <id>Q96CB9-4</id>
        <name>4</name>
        <sequence type="described" ref="VSP_045053"/>
    </isoform>
</comment>
<comment type="similarity">
    <text evidence="2">Belongs to the class I-like SAM-binding methyltransferase superfamily. RsmB/NOP family.</text>
</comment>
<evidence type="ECO:0000250" key="1">
    <source>
        <dbReference type="UniProtKB" id="Q95XR2"/>
    </source>
</evidence>
<evidence type="ECO:0000255" key="2">
    <source>
        <dbReference type="PROSITE-ProRule" id="PRU01023"/>
    </source>
</evidence>
<evidence type="ECO:0000269" key="3">
    <source>
    </source>
</evidence>
<evidence type="ECO:0000269" key="4">
    <source>
    </source>
</evidence>
<evidence type="ECO:0000269" key="5">
    <source>
    </source>
</evidence>
<evidence type="ECO:0000269" key="6">
    <source>
    </source>
</evidence>
<evidence type="ECO:0000269" key="7">
    <source>
    </source>
</evidence>
<evidence type="ECO:0000269" key="8">
    <source>
    </source>
</evidence>
<evidence type="ECO:0000303" key="9">
    <source>
    </source>
</evidence>
<evidence type="ECO:0000303" key="10">
    <source>
    </source>
</evidence>
<evidence type="ECO:0000303" key="11">
    <source>
    </source>
</evidence>
<evidence type="ECO:0000305" key="12"/>
<evidence type="ECO:0000305" key="13">
    <source>
    </source>
</evidence>
<evidence type="ECO:0000312" key="14">
    <source>
        <dbReference type="HGNC" id="HGNC:31802"/>
    </source>
</evidence>
<evidence type="ECO:0007744" key="15">
    <source>
        <dbReference type="PDB" id="4FP9"/>
    </source>
</evidence>
<evidence type="ECO:0007744" key="16">
    <source>
        <dbReference type="PDB" id="4FZV"/>
    </source>
</evidence>
<evidence type="ECO:0007744" key="17">
    <source>
    </source>
</evidence>
<evidence type="ECO:0007829" key="18">
    <source>
        <dbReference type="PDB" id="4FP9"/>
    </source>
</evidence>
<evidence type="ECO:0007829" key="19">
    <source>
        <dbReference type="PDB" id="4FZV"/>
    </source>
</evidence>
<evidence type="ECO:0007829" key="20">
    <source>
        <dbReference type="PDB" id="7OF0"/>
    </source>
</evidence>
<reference key="1">
    <citation type="journal article" date="2004" name="Nat. Genet.">
        <title>Complete sequencing and characterization of 21,243 full-length human cDNAs.</title>
        <authorList>
            <person name="Ota T."/>
            <person name="Suzuki Y."/>
            <person name="Nishikawa T."/>
            <person name="Otsuki T."/>
            <person name="Sugiyama T."/>
            <person name="Irie R."/>
            <person name="Wakamatsu A."/>
            <person name="Hayashi K."/>
            <person name="Sato H."/>
            <person name="Nagai K."/>
            <person name="Kimura K."/>
            <person name="Makita H."/>
            <person name="Sekine M."/>
            <person name="Obayashi M."/>
            <person name="Nishi T."/>
            <person name="Shibahara T."/>
            <person name="Tanaka T."/>
            <person name="Ishii S."/>
            <person name="Yamamoto J."/>
            <person name="Saito K."/>
            <person name="Kawai Y."/>
            <person name="Isono Y."/>
            <person name="Nakamura Y."/>
            <person name="Nagahari K."/>
            <person name="Murakami K."/>
            <person name="Yasuda T."/>
            <person name="Iwayanagi T."/>
            <person name="Wagatsuma M."/>
            <person name="Shiratori A."/>
            <person name="Sudo H."/>
            <person name="Hosoiri T."/>
            <person name="Kaku Y."/>
            <person name="Kodaira H."/>
            <person name="Kondo H."/>
            <person name="Sugawara M."/>
            <person name="Takahashi M."/>
            <person name="Kanda K."/>
            <person name="Yokoi T."/>
            <person name="Furuya T."/>
            <person name="Kikkawa E."/>
            <person name="Omura Y."/>
            <person name="Abe K."/>
            <person name="Kamihara K."/>
            <person name="Katsuta N."/>
            <person name="Sato K."/>
            <person name="Tanikawa M."/>
            <person name="Yamazaki M."/>
            <person name="Ninomiya K."/>
            <person name="Ishibashi T."/>
            <person name="Yamashita H."/>
            <person name="Murakawa K."/>
            <person name="Fujimori K."/>
            <person name="Tanai H."/>
            <person name="Kimata M."/>
            <person name="Watanabe M."/>
            <person name="Hiraoka S."/>
            <person name="Chiba Y."/>
            <person name="Ishida S."/>
            <person name="Ono Y."/>
            <person name="Takiguchi S."/>
            <person name="Watanabe S."/>
            <person name="Yosida M."/>
            <person name="Hotuta T."/>
            <person name="Kusano J."/>
            <person name="Kanehori K."/>
            <person name="Takahashi-Fujii A."/>
            <person name="Hara H."/>
            <person name="Tanase T.-O."/>
            <person name="Nomura Y."/>
            <person name="Togiya S."/>
            <person name="Komai F."/>
            <person name="Hara R."/>
            <person name="Takeuchi K."/>
            <person name="Arita M."/>
            <person name="Imose N."/>
            <person name="Musashino K."/>
            <person name="Yuuki H."/>
            <person name="Oshima A."/>
            <person name="Sasaki N."/>
            <person name="Aotsuka S."/>
            <person name="Yoshikawa Y."/>
            <person name="Matsunawa H."/>
            <person name="Ichihara T."/>
            <person name="Shiohata N."/>
            <person name="Sano S."/>
            <person name="Moriya S."/>
            <person name="Momiyama H."/>
            <person name="Satoh N."/>
            <person name="Takami S."/>
            <person name="Terashima Y."/>
            <person name="Suzuki O."/>
            <person name="Nakagawa S."/>
            <person name="Senoh A."/>
            <person name="Mizoguchi H."/>
            <person name="Goto Y."/>
            <person name="Shimizu F."/>
            <person name="Wakebe H."/>
            <person name="Hishigaki H."/>
            <person name="Watanabe T."/>
            <person name="Sugiyama A."/>
            <person name="Takemoto M."/>
            <person name="Kawakami B."/>
            <person name="Yamazaki M."/>
            <person name="Watanabe K."/>
            <person name="Kumagai A."/>
            <person name="Itakura S."/>
            <person name="Fukuzumi Y."/>
            <person name="Fujimori Y."/>
            <person name="Komiyama M."/>
            <person name="Tashiro H."/>
            <person name="Tanigami A."/>
            <person name="Fujiwara T."/>
            <person name="Ono T."/>
            <person name="Yamada K."/>
            <person name="Fujii Y."/>
            <person name="Ozaki K."/>
            <person name="Hirao M."/>
            <person name="Ohmori Y."/>
            <person name="Kawabata A."/>
            <person name="Hikiji T."/>
            <person name="Kobatake N."/>
            <person name="Inagaki H."/>
            <person name="Ikema Y."/>
            <person name="Okamoto S."/>
            <person name="Okitani R."/>
            <person name="Kawakami T."/>
            <person name="Noguchi S."/>
            <person name="Itoh T."/>
            <person name="Shigeta K."/>
            <person name="Senba T."/>
            <person name="Matsumura K."/>
            <person name="Nakajima Y."/>
            <person name="Mizuno T."/>
            <person name="Morinaga M."/>
            <person name="Sasaki M."/>
            <person name="Togashi T."/>
            <person name="Oyama M."/>
            <person name="Hata H."/>
            <person name="Watanabe M."/>
            <person name="Komatsu T."/>
            <person name="Mizushima-Sugano J."/>
            <person name="Satoh T."/>
            <person name="Shirai Y."/>
            <person name="Takahashi Y."/>
            <person name="Nakagawa K."/>
            <person name="Okumura K."/>
            <person name="Nagase T."/>
            <person name="Nomura N."/>
            <person name="Kikuchi H."/>
            <person name="Masuho Y."/>
            <person name="Yamashita R."/>
            <person name="Nakai K."/>
            <person name="Yada T."/>
            <person name="Nakamura Y."/>
            <person name="Ohara O."/>
            <person name="Isogai T."/>
            <person name="Sugano S."/>
        </authorList>
    </citation>
    <scope>NUCLEOTIDE SEQUENCE [LARGE SCALE MRNA] (ISOFORMS 1; 3 AND 4)</scope>
    <scope>VARIANTS ALA-51 AND VAL-365</scope>
    <source>
        <tissue>Brain</tissue>
        <tissue>Embryo</tissue>
        <tissue>Placenta</tissue>
        <tissue>Testis</tissue>
    </source>
</reference>
<reference key="2">
    <citation type="journal article" date="2006" name="Nature">
        <title>The DNA sequence and biological annotation of human chromosome 1.</title>
        <authorList>
            <person name="Gregory S.G."/>
            <person name="Barlow K.F."/>
            <person name="McLay K.E."/>
            <person name="Kaul R."/>
            <person name="Swarbreck D."/>
            <person name="Dunham A."/>
            <person name="Scott C.E."/>
            <person name="Howe K.L."/>
            <person name="Woodfine K."/>
            <person name="Spencer C.C.A."/>
            <person name="Jones M.C."/>
            <person name="Gillson C."/>
            <person name="Searle S."/>
            <person name="Zhou Y."/>
            <person name="Kokocinski F."/>
            <person name="McDonald L."/>
            <person name="Evans R."/>
            <person name="Phillips K."/>
            <person name="Atkinson A."/>
            <person name="Cooper R."/>
            <person name="Jones C."/>
            <person name="Hall R.E."/>
            <person name="Andrews T.D."/>
            <person name="Lloyd C."/>
            <person name="Ainscough R."/>
            <person name="Almeida J.P."/>
            <person name="Ambrose K.D."/>
            <person name="Anderson F."/>
            <person name="Andrew R.W."/>
            <person name="Ashwell R.I.S."/>
            <person name="Aubin K."/>
            <person name="Babbage A.K."/>
            <person name="Bagguley C.L."/>
            <person name="Bailey J."/>
            <person name="Beasley H."/>
            <person name="Bethel G."/>
            <person name="Bird C.P."/>
            <person name="Bray-Allen S."/>
            <person name="Brown J.Y."/>
            <person name="Brown A.J."/>
            <person name="Buckley D."/>
            <person name="Burton J."/>
            <person name="Bye J."/>
            <person name="Carder C."/>
            <person name="Chapman J.C."/>
            <person name="Clark S.Y."/>
            <person name="Clarke G."/>
            <person name="Clee C."/>
            <person name="Cobley V."/>
            <person name="Collier R.E."/>
            <person name="Corby N."/>
            <person name="Coville G.J."/>
            <person name="Davies J."/>
            <person name="Deadman R."/>
            <person name="Dunn M."/>
            <person name="Earthrowl M."/>
            <person name="Ellington A.G."/>
            <person name="Errington H."/>
            <person name="Frankish A."/>
            <person name="Frankland J."/>
            <person name="French L."/>
            <person name="Garner P."/>
            <person name="Garnett J."/>
            <person name="Gay L."/>
            <person name="Ghori M.R.J."/>
            <person name="Gibson R."/>
            <person name="Gilby L.M."/>
            <person name="Gillett W."/>
            <person name="Glithero R.J."/>
            <person name="Grafham D.V."/>
            <person name="Griffiths C."/>
            <person name="Griffiths-Jones S."/>
            <person name="Grocock R."/>
            <person name="Hammond S."/>
            <person name="Harrison E.S.I."/>
            <person name="Hart E."/>
            <person name="Haugen E."/>
            <person name="Heath P.D."/>
            <person name="Holmes S."/>
            <person name="Holt K."/>
            <person name="Howden P.J."/>
            <person name="Hunt A.R."/>
            <person name="Hunt S.E."/>
            <person name="Hunter G."/>
            <person name="Isherwood J."/>
            <person name="James R."/>
            <person name="Johnson C."/>
            <person name="Johnson D."/>
            <person name="Joy A."/>
            <person name="Kay M."/>
            <person name="Kershaw J.K."/>
            <person name="Kibukawa M."/>
            <person name="Kimberley A.M."/>
            <person name="King A."/>
            <person name="Knights A.J."/>
            <person name="Lad H."/>
            <person name="Laird G."/>
            <person name="Lawlor S."/>
            <person name="Leongamornlert D.A."/>
            <person name="Lloyd D.M."/>
            <person name="Loveland J."/>
            <person name="Lovell J."/>
            <person name="Lush M.J."/>
            <person name="Lyne R."/>
            <person name="Martin S."/>
            <person name="Mashreghi-Mohammadi M."/>
            <person name="Matthews L."/>
            <person name="Matthews N.S.W."/>
            <person name="McLaren S."/>
            <person name="Milne S."/>
            <person name="Mistry S."/>
            <person name="Moore M.J.F."/>
            <person name="Nickerson T."/>
            <person name="O'Dell C.N."/>
            <person name="Oliver K."/>
            <person name="Palmeiri A."/>
            <person name="Palmer S.A."/>
            <person name="Parker A."/>
            <person name="Patel D."/>
            <person name="Pearce A.V."/>
            <person name="Peck A.I."/>
            <person name="Pelan S."/>
            <person name="Phelps K."/>
            <person name="Phillimore B.J."/>
            <person name="Plumb R."/>
            <person name="Rajan J."/>
            <person name="Raymond C."/>
            <person name="Rouse G."/>
            <person name="Saenphimmachak C."/>
            <person name="Sehra H.K."/>
            <person name="Sheridan E."/>
            <person name="Shownkeen R."/>
            <person name="Sims S."/>
            <person name="Skuce C.D."/>
            <person name="Smith M."/>
            <person name="Steward C."/>
            <person name="Subramanian S."/>
            <person name="Sycamore N."/>
            <person name="Tracey A."/>
            <person name="Tromans A."/>
            <person name="Van Helmond Z."/>
            <person name="Wall M."/>
            <person name="Wallis J.M."/>
            <person name="White S."/>
            <person name="Whitehead S.L."/>
            <person name="Wilkinson J.E."/>
            <person name="Willey D.L."/>
            <person name="Williams H."/>
            <person name="Wilming L."/>
            <person name="Wray P.W."/>
            <person name="Wu Z."/>
            <person name="Coulson A."/>
            <person name="Vaudin M."/>
            <person name="Sulston J.E."/>
            <person name="Durbin R.M."/>
            <person name="Hubbard T."/>
            <person name="Wooster R."/>
            <person name="Dunham I."/>
            <person name="Carter N.P."/>
            <person name="McVean G."/>
            <person name="Ross M.T."/>
            <person name="Harrow J."/>
            <person name="Olson M.V."/>
            <person name="Beck S."/>
            <person name="Rogers J."/>
            <person name="Bentley D.R."/>
        </authorList>
    </citation>
    <scope>NUCLEOTIDE SEQUENCE [LARGE SCALE GENOMIC DNA]</scope>
</reference>
<reference key="3">
    <citation type="submission" date="2005-09" db="EMBL/GenBank/DDBJ databases">
        <authorList>
            <person name="Mural R.J."/>
            <person name="Istrail S."/>
            <person name="Sutton G."/>
            <person name="Florea L."/>
            <person name="Halpern A.L."/>
            <person name="Mobarry C.M."/>
            <person name="Lippert R."/>
            <person name="Walenz B."/>
            <person name="Shatkay H."/>
            <person name="Dew I."/>
            <person name="Miller J.R."/>
            <person name="Flanigan M.J."/>
            <person name="Edwards N.J."/>
            <person name="Bolanos R."/>
            <person name="Fasulo D."/>
            <person name="Halldorsson B.V."/>
            <person name="Hannenhalli S."/>
            <person name="Turner R."/>
            <person name="Yooseph S."/>
            <person name="Lu F."/>
            <person name="Nusskern D.R."/>
            <person name="Shue B.C."/>
            <person name="Zheng X.H."/>
            <person name="Zhong F."/>
            <person name="Delcher A.L."/>
            <person name="Huson D.H."/>
            <person name="Kravitz S.A."/>
            <person name="Mouchard L."/>
            <person name="Reinert K."/>
            <person name="Remington K.A."/>
            <person name="Clark A.G."/>
            <person name="Waterman M.S."/>
            <person name="Eichler E.E."/>
            <person name="Adams M.D."/>
            <person name="Hunkapiller M.W."/>
            <person name="Myers E.W."/>
            <person name="Venter J.C."/>
        </authorList>
    </citation>
    <scope>NUCLEOTIDE SEQUENCE [LARGE SCALE GENOMIC DNA]</scope>
</reference>
<reference key="4">
    <citation type="journal article" date="2004" name="Genome Res.">
        <title>The status, quality, and expansion of the NIH full-length cDNA project: the Mammalian Gene Collection (MGC).</title>
        <authorList>
            <consortium name="The MGC Project Team"/>
        </authorList>
    </citation>
    <scope>NUCLEOTIDE SEQUENCE [LARGE SCALE MRNA] (ISOFORM 1)</scope>
    <scope>NUCLEOTIDE SEQUENCE [LARGE SCALE MRNA] OF 96-384 (ISOFORM 2)</scope>
    <scope>VARIANT ALA-51</scope>
    <source>
        <tissue>Colon</tissue>
        <tissue>Duodenum</tissue>
    </source>
</reference>
<reference key="5">
    <citation type="journal article" date="2008" name="Proc. Natl. Acad. Sci. U.S.A.">
        <title>A quantitative atlas of mitotic phosphorylation.</title>
        <authorList>
            <person name="Dephoure N."/>
            <person name="Zhou C."/>
            <person name="Villen J."/>
            <person name="Beausoleil S.A."/>
            <person name="Bakalarski C.E."/>
            <person name="Elledge S.J."/>
            <person name="Gygi S.P."/>
        </authorList>
    </citation>
    <scope>IDENTIFICATION BY MASS SPECTROMETRY [LARGE SCALE ANALYSIS]</scope>
    <source>
        <tissue>Cervix carcinoma</tissue>
    </source>
</reference>
<reference key="6">
    <citation type="journal article" date="2011" name="BMC Syst. Biol.">
        <title>Initial characterization of the human central proteome.</title>
        <authorList>
            <person name="Burkard T.R."/>
            <person name="Planyavsky M."/>
            <person name="Kaupe I."/>
            <person name="Breitwieser F.P."/>
            <person name="Buerckstuemmer T."/>
            <person name="Bennett K.L."/>
            <person name="Superti-Furga G."/>
            <person name="Colinge J."/>
        </authorList>
    </citation>
    <scope>IDENTIFICATION BY MASS SPECTROMETRY [LARGE SCALE ANALYSIS]</scope>
</reference>
<reference key="7">
    <citation type="journal article" date="2011" name="Cell Metab.">
        <title>MTERF4 regulates translation by targeting the methyltransferase NSUN4 to the mammalian mitochondrial ribosome.</title>
        <authorList>
            <person name="Camara Y."/>
            <person name="Asin-Cayuela J."/>
            <person name="Park C.B."/>
            <person name="Metodiev M.D."/>
            <person name="Shi Y."/>
            <person name="Ruzzenente B."/>
            <person name="Kukat C."/>
            <person name="Habermann B."/>
            <person name="Wibom R."/>
            <person name="Hultenby K."/>
            <person name="Franz T."/>
            <person name="Erdjument-Bromage H."/>
            <person name="Tempst P."/>
            <person name="Hallberg B.M."/>
            <person name="Gustafsson C.M."/>
            <person name="Larsson N.G."/>
        </authorList>
    </citation>
    <scope>FUNCTION</scope>
    <scope>INTERACTION WITH MTERF4</scope>
    <scope>SUBCELLULAR LOCATION</scope>
</reference>
<reference key="8">
    <citation type="journal article" date="2013" name="J. Proteome Res.">
        <title>Toward a comprehensive characterization of a human cancer cell phosphoproteome.</title>
        <authorList>
            <person name="Zhou H."/>
            <person name="Di Palma S."/>
            <person name="Preisinger C."/>
            <person name="Peng M."/>
            <person name="Polat A.N."/>
            <person name="Heck A.J."/>
            <person name="Mohammed S."/>
        </authorList>
    </citation>
    <scope>PHOSPHORYLATION [LARGE SCALE ANALYSIS] AT SER-206</scope>
    <scope>IDENTIFICATION BY MASS SPECTROMETRY [LARGE SCALE ANALYSIS]</scope>
    <source>
        <tissue>Cervix carcinoma</tissue>
        <tissue>Erythroleukemia</tissue>
    </source>
</reference>
<reference key="9">
    <citation type="journal article" date="2015" name="Proteomics">
        <title>N-terminome analysis of the human mitochondrial proteome.</title>
        <authorList>
            <person name="Vaca Jacome A.S."/>
            <person name="Rabilloud T."/>
            <person name="Schaeffer-Reiss C."/>
            <person name="Rompais M."/>
            <person name="Ayoub D."/>
            <person name="Lane L."/>
            <person name="Bairoch A."/>
            <person name="Van Dorsselaer A."/>
            <person name="Carapito C."/>
        </authorList>
    </citation>
    <scope>IDENTIFICATION BY MASS SPECTROMETRY [LARGE SCALE ANALYSIS]</scope>
</reference>
<reference key="10">
    <citation type="journal article" date="2024" name="Mol. Cell">
        <title>RNA 5-methylcytosine marks mitochondrial double-stranded RNAs for degradation and cytosolic release.</title>
        <authorList>
            <person name="Kim S."/>
            <person name="Tan S."/>
            <person name="Ku J."/>
            <person name="Widowati T.A."/>
            <person name="Ku D."/>
            <person name="Lee K."/>
            <person name="You K."/>
            <person name="Kim Y."/>
        </authorList>
    </citation>
    <scope>FUNCTION</scope>
    <scope>CATALYTIC ACTIVITY</scope>
    <scope>MUTAGENESIS OF CYS-258 AND CYS-310</scope>
</reference>
<reference evidence="15" key="11">
    <citation type="journal article" date="2012" name="Proc. Natl. Acad. Sci. U.S.A.">
        <title>Structure of the human MTERF4-NSUN4 protein complex that regulates mitochondrial ribosome biogenesis.</title>
        <authorList>
            <person name="Spahr H."/>
            <person name="Habermann B."/>
            <person name="Gustafsson C.M."/>
            <person name="Larsson N.G."/>
            <person name="Hallberg B.M."/>
        </authorList>
    </citation>
    <scope>X-RAY CRYSTALLOGRAPHY (2.9 ANGSTROMS) OF 26-384 IN COMPLEX WITH S-ADENOSYL-L-METHIONINE AND MTERFD2</scope>
    <scope>INTERACTION WITH MTERFD2</scope>
    <scope>ACTIVE SITE</scope>
    <scope>SUBCELLULAR LOCATION</scope>
    <scope>MUTAGENESIS OF VAL-65; ARG-136; ILE-139 AND ARG-141</scope>
</reference>
<reference evidence="16" key="12">
    <citation type="journal article" date="2012" name="Structure">
        <title>Structure of the essential MTERF4:NSUN4 protein complex reveals how an MTERF protein collaborates to facilitate rRNA modification.</title>
        <authorList>
            <person name="Yakubovskaya E."/>
            <person name="Guja K.E."/>
            <person name="Mejia E."/>
            <person name="Castano S."/>
            <person name="Hambardjieva E."/>
            <person name="Choi W.S."/>
            <person name="Garcia-Diaz M."/>
        </authorList>
    </citation>
    <scope>X-RAY CRYSTALLOGRAPHY (2.0 ANGSTROMS) OF 26-384 IN COMPLEX WITH S-ADENOSYL-L-METHIONINE AND MTERFD2</scope>
    <scope>FUNCTION IN METHYLATION OF 16S RRNA</scope>
    <scope>INTERACTION WITH MTERFD2</scope>
    <scope>SUBCELLULAR LOCATION</scope>
</reference>